<evidence type="ECO:0000255" key="1">
    <source>
        <dbReference type="HAMAP-Rule" id="MF_01217"/>
    </source>
</evidence>
<evidence type="ECO:0000255" key="2">
    <source>
        <dbReference type="PROSITE-ProRule" id="PRU00258"/>
    </source>
</evidence>
<keyword id="KW-0963">Cytoplasm</keyword>
<keyword id="KW-0275">Fatty acid biosynthesis</keyword>
<keyword id="KW-0276">Fatty acid metabolism</keyword>
<keyword id="KW-0444">Lipid biosynthesis</keyword>
<keyword id="KW-0443">Lipid metabolism</keyword>
<keyword id="KW-0596">Phosphopantetheine</keyword>
<keyword id="KW-0597">Phosphoprotein</keyword>
<keyword id="KW-1185">Reference proteome</keyword>
<gene>
    <name evidence="1" type="primary">acpP</name>
    <name type="ordered locus">BP2440</name>
</gene>
<organism>
    <name type="scientific">Bordetella pertussis (strain Tohama I / ATCC BAA-589 / NCTC 13251)</name>
    <dbReference type="NCBI Taxonomy" id="257313"/>
    <lineage>
        <taxon>Bacteria</taxon>
        <taxon>Pseudomonadati</taxon>
        <taxon>Pseudomonadota</taxon>
        <taxon>Betaproteobacteria</taxon>
        <taxon>Burkholderiales</taxon>
        <taxon>Alcaligenaceae</taxon>
        <taxon>Bordetella</taxon>
    </lineage>
</organism>
<comment type="function">
    <text evidence="1">Carrier of the growing fatty acid chain in fatty acid biosynthesis.</text>
</comment>
<comment type="pathway">
    <text evidence="1">Lipid metabolism; fatty acid biosynthesis.</text>
</comment>
<comment type="subcellular location">
    <subcellularLocation>
        <location evidence="1">Cytoplasm</location>
    </subcellularLocation>
</comment>
<comment type="PTM">
    <text evidence="1">4'-phosphopantetheine is transferred from CoA to a specific serine of apo-ACP by AcpS. This modification is essential for activity because fatty acids are bound in thioester linkage to the sulfhydryl of the prosthetic group.</text>
</comment>
<comment type="similarity">
    <text evidence="1">Belongs to the acyl carrier protein (ACP) family.</text>
</comment>
<accession>Q7VW32</accession>
<feature type="chain" id="PRO_0000180113" description="Acyl carrier protein">
    <location>
        <begin position="1"/>
        <end position="79"/>
    </location>
</feature>
<feature type="domain" description="Carrier" evidence="2">
    <location>
        <begin position="2"/>
        <end position="77"/>
    </location>
</feature>
<feature type="modified residue" description="O-(pantetheine 4'-phosphoryl)serine" evidence="2">
    <location>
        <position position="37"/>
    </location>
</feature>
<protein>
    <recommendedName>
        <fullName evidence="1">Acyl carrier protein</fullName>
        <shortName evidence="1">ACP</shortName>
    </recommendedName>
</protein>
<reference key="1">
    <citation type="journal article" date="2003" name="Nat. Genet.">
        <title>Comparative analysis of the genome sequences of Bordetella pertussis, Bordetella parapertussis and Bordetella bronchiseptica.</title>
        <authorList>
            <person name="Parkhill J."/>
            <person name="Sebaihia M."/>
            <person name="Preston A."/>
            <person name="Murphy L.D."/>
            <person name="Thomson N.R."/>
            <person name="Harris D.E."/>
            <person name="Holden M.T.G."/>
            <person name="Churcher C.M."/>
            <person name="Bentley S.D."/>
            <person name="Mungall K.L."/>
            <person name="Cerdeno-Tarraga A.-M."/>
            <person name="Temple L."/>
            <person name="James K.D."/>
            <person name="Harris B."/>
            <person name="Quail M.A."/>
            <person name="Achtman M."/>
            <person name="Atkin R."/>
            <person name="Baker S."/>
            <person name="Basham D."/>
            <person name="Bason N."/>
            <person name="Cherevach I."/>
            <person name="Chillingworth T."/>
            <person name="Collins M."/>
            <person name="Cronin A."/>
            <person name="Davis P."/>
            <person name="Doggett J."/>
            <person name="Feltwell T."/>
            <person name="Goble A."/>
            <person name="Hamlin N."/>
            <person name="Hauser H."/>
            <person name="Holroyd S."/>
            <person name="Jagels K."/>
            <person name="Leather S."/>
            <person name="Moule S."/>
            <person name="Norberczak H."/>
            <person name="O'Neil S."/>
            <person name="Ormond D."/>
            <person name="Price C."/>
            <person name="Rabbinowitsch E."/>
            <person name="Rutter S."/>
            <person name="Sanders M."/>
            <person name="Saunders D."/>
            <person name="Seeger K."/>
            <person name="Sharp S."/>
            <person name="Simmonds M."/>
            <person name="Skelton J."/>
            <person name="Squares R."/>
            <person name="Squares S."/>
            <person name="Stevens K."/>
            <person name="Unwin L."/>
            <person name="Whitehead S."/>
            <person name="Barrell B.G."/>
            <person name="Maskell D.J."/>
        </authorList>
    </citation>
    <scope>NUCLEOTIDE SEQUENCE [LARGE SCALE GENOMIC DNA]</scope>
    <source>
        <strain>Tohama I / ATCC BAA-589 / NCTC 13251</strain>
    </source>
</reference>
<name>ACP_BORPE</name>
<dbReference type="EMBL" id="BX640418">
    <property type="protein sequence ID" value="CAE42712.1"/>
    <property type="molecule type" value="Genomic_DNA"/>
</dbReference>
<dbReference type="RefSeq" id="NP_881068.1">
    <property type="nucleotide sequence ID" value="NC_002929.2"/>
</dbReference>
<dbReference type="RefSeq" id="WP_003813816.1">
    <property type="nucleotide sequence ID" value="NZ_CP039022.1"/>
</dbReference>
<dbReference type="SMR" id="Q7VW32"/>
<dbReference type="STRING" id="257313.BP2440"/>
<dbReference type="PaxDb" id="257313-BP2440"/>
<dbReference type="GeneID" id="92994638"/>
<dbReference type="KEGG" id="bpe:BP2440"/>
<dbReference type="PATRIC" id="fig|257313.5.peg.2630"/>
<dbReference type="eggNOG" id="COG0236">
    <property type="taxonomic scope" value="Bacteria"/>
</dbReference>
<dbReference type="HOGENOM" id="CLU_108696_5_1_4"/>
<dbReference type="UniPathway" id="UPA00094"/>
<dbReference type="PRO" id="PR:Q7VW32"/>
<dbReference type="Proteomes" id="UP000002676">
    <property type="component" value="Chromosome"/>
</dbReference>
<dbReference type="GO" id="GO:0005829">
    <property type="term" value="C:cytosol"/>
    <property type="evidence" value="ECO:0007669"/>
    <property type="project" value="TreeGrafter"/>
</dbReference>
<dbReference type="GO" id="GO:0016020">
    <property type="term" value="C:membrane"/>
    <property type="evidence" value="ECO:0007669"/>
    <property type="project" value="GOC"/>
</dbReference>
<dbReference type="GO" id="GO:0000035">
    <property type="term" value="F:acyl binding"/>
    <property type="evidence" value="ECO:0007669"/>
    <property type="project" value="TreeGrafter"/>
</dbReference>
<dbReference type="GO" id="GO:0000036">
    <property type="term" value="F:acyl carrier activity"/>
    <property type="evidence" value="ECO:0007669"/>
    <property type="project" value="UniProtKB-UniRule"/>
</dbReference>
<dbReference type="GO" id="GO:0009245">
    <property type="term" value="P:lipid A biosynthetic process"/>
    <property type="evidence" value="ECO:0007669"/>
    <property type="project" value="TreeGrafter"/>
</dbReference>
<dbReference type="FunFam" id="1.10.1200.10:FF:000001">
    <property type="entry name" value="Acyl carrier protein"/>
    <property type="match status" value="1"/>
</dbReference>
<dbReference type="Gene3D" id="1.10.1200.10">
    <property type="entry name" value="ACP-like"/>
    <property type="match status" value="1"/>
</dbReference>
<dbReference type="HAMAP" id="MF_01217">
    <property type="entry name" value="Acyl_carrier"/>
    <property type="match status" value="1"/>
</dbReference>
<dbReference type="InterPro" id="IPR003231">
    <property type="entry name" value="ACP"/>
</dbReference>
<dbReference type="InterPro" id="IPR036736">
    <property type="entry name" value="ACP-like_sf"/>
</dbReference>
<dbReference type="InterPro" id="IPR009081">
    <property type="entry name" value="PP-bd_ACP"/>
</dbReference>
<dbReference type="InterPro" id="IPR006162">
    <property type="entry name" value="Ppantetheine_attach_site"/>
</dbReference>
<dbReference type="NCBIfam" id="TIGR00517">
    <property type="entry name" value="acyl_carrier"/>
    <property type="match status" value="1"/>
</dbReference>
<dbReference type="NCBIfam" id="NF002148">
    <property type="entry name" value="PRK00982.1-2"/>
    <property type="match status" value="1"/>
</dbReference>
<dbReference type="NCBIfam" id="NF002149">
    <property type="entry name" value="PRK00982.1-3"/>
    <property type="match status" value="1"/>
</dbReference>
<dbReference type="NCBIfam" id="NF002150">
    <property type="entry name" value="PRK00982.1-4"/>
    <property type="match status" value="1"/>
</dbReference>
<dbReference type="NCBIfam" id="NF002151">
    <property type="entry name" value="PRK00982.1-5"/>
    <property type="match status" value="1"/>
</dbReference>
<dbReference type="PANTHER" id="PTHR20863">
    <property type="entry name" value="ACYL CARRIER PROTEIN"/>
    <property type="match status" value="1"/>
</dbReference>
<dbReference type="PANTHER" id="PTHR20863:SF76">
    <property type="entry name" value="CARRIER DOMAIN-CONTAINING PROTEIN"/>
    <property type="match status" value="1"/>
</dbReference>
<dbReference type="Pfam" id="PF00550">
    <property type="entry name" value="PP-binding"/>
    <property type="match status" value="1"/>
</dbReference>
<dbReference type="SUPFAM" id="SSF47336">
    <property type="entry name" value="ACP-like"/>
    <property type="match status" value="1"/>
</dbReference>
<dbReference type="PROSITE" id="PS50075">
    <property type="entry name" value="CARRIER"/>
    <property type="match status" value="1"/>
</dbReference>
<dbReference type="PROSITE" id="PS00012">
    <property type="entry name" value="PHOSPHOPANTETHEINE"/>
    <property type="match status" value="1"/>
</dbReference>
<proteinExistence type="inferred from homology"/>
<sequence length="79" mass="8899">MESIEQRVKKIVAEQLGVNEAEIKNESSFLDDLGADSLDMVELVMALEDEFETEIPDEEAEKITTVQQAIDYINSHGKQ</sequence>